<comment type="catalytic activity">
    <reaction>
        <text>1-(5-phospho-beta-D-ribosyl)-ATP + H2O = 1-(5-phospho-beta-D-ribosyl)-5'-AMP + diphosphate + H(+)</text>
        <dbReference type="Rhea" id="RHEA:22828"/>
        <dbReference type="ChEBI" id="CHEBI:15377"/>
        <dbReference type="ChEBI" id="CHEBI:15378"/>
        <dbReference type="ChEBI" id="CHEBI:33019"/>
        <dbReference type="ChEBI" id="CHEBI:59457"/>
        <dbReference type="ChEBI" id="CHEBI:73183"/>
        <dbReference type="EC" id="3.6.1.31"/>
    </reaction>
</comment>
<comment type="pathway">
    <text>Amino-acid biosynthesis; L-histidine biosynthesis; L-histidine from 5-phospho-alpha-D-ribose 1-diphosphate: step 2/9.</text>
</comment>
<comment type="subcellular location">
    <subcellularLocation>
        <location evidence="1">Cytoplasm</location>
    </subcellularLocation>
</comment>
<comment type="similarity">
    <text evidence="3">Belongs to the PRA-PH family.</text>
</comment>
<name>HIS2_LISIN</name>
<dbReference type="EC" id="3.6.1.31"/>
<dbReference type="EMBL" id="AL596165">
    <property type="protein sequence ID" value="CAC95802.1"/>
    <property type="molecule type" value="Genomic_DNA"/>
</dbReference>
<dbReference type="PIR" id="AB1504">
    <property type="entry name" value="AB1504"/>
</dbReference>
<dbReference type="RefSeq" id="WP_010990491.1">
    <property type="nucleotide sequence ID" value="NC_003212.1"/>
</dbReference>
<dbReference type="SMR" id="Q92E90"/>
<dbReference type="STRING" id="272626.gene:17564896"/>
<dbReference type="GeneID" id="93234018"/>
<dbReference type="KEGG" id="lin:lin0570"/>
<dbReference type="eggNOG" id="COG0140">
    <property type="taxonomic scope" value="Bacteria"/>
</dbReference>
<dbReference type="HOGENOM" id="CLU_123337_0_0_9"/>
<dbReference type="OrthoDB" id="9795769at2"/>
<dbReference type="UniPathway" id="UPA00031">
    <property type="reaction ID" value="UER00007"/>
</dbReference>
<dbReference type="Proteomes" id="UP000002513">
    <property type="component" value="Chromosome"/>
</dbReference>
<dbReference type="GO" id="GO:0005737">
    <property type="term" value="C:cytoplasm"/>
    <property type="evidence" value="ECO:0007669"/>
    <property type="project" value="UniProtKB-SubCell"/>
</dbReference>
<dbReference type="GO" id="GO:0005524">
    <property type="term" value="F:ATP binding"/>
    <property type="evidence" value="ECO:0007669"/>
    <property type="project" value="UniProtKB-KW"/>
</dbReference>
<dbReference type="GO" id="GO:0004636">
    <property type="term" value="F:phosphoribosyl-ATP diphosphatase activity"/>
    <property type="evidence" value="ECO:0007669"/>
    <property type="project" value="UniProtKB-UniRule"/>
</dbReference>
<dbReference type="GO" id="GO:0000105">
    <property type="term" value="P:L-histidine biosynthetic process"/>
    <property type="evidence" value="ECO:0007669"/>
    <property type="project" value="UniProtKB-UniRule"/>
</dbReference>
<dbReference type="CDD" id="cd11534">
    <property type="entry name" value="NTP-PPase_HisIE_like"/>
    <property type="match status" value="1"/>
</dbReference>
<dbReference type="Gene3D" id="1.10.287.1080">
    <property type="entry name" value="MazG-like"/>
    <property type="match status" value="1"/>
</dbReference>
<dbReference type="HAMAP" id="MF_01020">
    <property type="entry name" value="HisE"/>
    <property type="match status" value="1"/>
</dbReference>
<dbReference type="InterPro" id="IPR008179">
    <property type="entry name" value="HisE"/>
</dbReference>
<dbReference type="InterPro" id="IPR021130">
    <property type="entry name" value="PRib-ATP_PPHydrolase-like"/>
</dbReference>
<dbReference type="NCBIfam" id="TIGR03188">
    <property type="entry name" value="histidine_hisI"/>
    <property type="match status" value="1"/>
</dbReference>
<dbReference type="PANTHER" id="PTHR42945">
    <property type="entry name" value="HISTIDINE BIOSYNTHESIS BIFUNCTIONAL PROTEIN"/>
    <property type="match status" value="1"/>
</dbReference>
<dbReference type="PANTHER" id="PTHR42945:SF9">
    <property type="entry name" value="HISTIDINE BIOSYNTHESIS BIFUNCTIONAL PROTEIN HISIE"/>
    <property type="match status" value="1"/>
</dbReference>
<dbReference type="Pfam" id="PF01503">
    <property type="entry name" value="PRA-PH"/>
    <property type="match status" value="1"/>
</dbReference>
<dbReference type="SUPFAM" id="SSF101386">
    <property type="entry name" value="all-alpha NTP pyrophosphatases"/>
    <property type="match status" value="1"/>
</dbReference>
<accession>Q92E90</accession>
<keyword id="KW-0028">Amino-acid biosynthesis</keyword>
<keyword id="KW-0067">ATP-binding</keyword>
<keyword id="KW-0963">Cytoplasm</keyword>
<keyword id="KW-0368">Histidine biosynthesis</keyword>
<keyword id="KW-0378">Hydrolase</keyword>
<keyword id="KW-0547">Nucleotide-binding</keyword>
<proteinExistence type="inferred from homology"/>
<feature type="chain" id="PRO_0000136366" description="Phosphoribosyl-ATP pyrophosphatase">
    <location>
        <begin position="1"/>
        <end position="103"/>
    </location>
</feature>
<feature type="region of interest" description="Disordered" evidence="2">
    <location>
        <begin position="84"/>
        <end position="103"/>
    </location>
</feature>
<sequence length="103" mass="11897">MLSDLYEEIKLRKTQPKEGSYTNYLFEKGLDKILKKVGEETTEVVIAAKNNNEELISEITDLTYHLLVLLAEKDIPLEDIKQELQSREGKLSKTSDRKEINDL</sequence>
<gene>
    <name type="primary">hisE</name>
    <name type="ordered locus">lin0570</name>
</gene>
<reference key="1">
    <citation type="journal article" date="2001" name="Science">
        <title>Comparative genomics of Listeria species.</title>
        <authorList>
            <person name="Glaser P."/>
            <person name="Frangeul L."/>
            <person name="Buchrieser C."/>
            <person name="Rusniok C."/>
            <person name="Amend A."/>
            <person name="Baquero F."/>
            <person name="Berche P."/>
            <person name="Bloecker H."/>
            <person name="Brandt P."/>
            <person name="Chakraborty T."/>
            <person name="Charbit A."/>
            <person name="Chetouani F."/>
            <person name="Couve E."/>
            <person name="de Daruvar A."/>
            <person name="Dehoux P."/>
            <person name="Domann E."/>
            <person name="Dominguez-Bernal G."/>
            <person name="Duchaud E."/>
            <person name="Durant L."/>
            <person name="Dussurget O."/>
            <person name="Entian K.-D."/>
            <person name="Fsihi H."/>
            <person name="Garcia-del Portillo F."/>
            <person name="Garrido P."/>
            <person name="Gautier L."/>
            <person name="Goebel W."/>
            <person name="Gomez-Lopez N."/>
            <person name="Hain T."/>
            <person name="Hauf J."/>
            <person name="Jackson D."/>
            <person name="Jones L.-M."/>
            <person name="Kaerst U."/>
            <person name="Kreft J."/>
            <person name="Kuhn M."/>
            <person name="Kunst F."/>
            <person name="Kurapkat G."/>
            <person name="Madueno E."/>
            <person name="Maitournam A."/>
            <person name="Mata Vicente J."/>
            <person name="Ng E."/>
            <person name="Nedjari H."/>
            <person name="Nordsiek G."/>
            <person name="Novella S."/>
            <person name="de Pablos B."/>
            <person name="Perez-Diaz J.-C."/>
            <person name="Purcell R."/>
            <person name="Remmel B."/>
            <person name="Rose M."/>
            <person name="Schlueter T."/>
            <person name="Simoes N."/>
            <person name="Tierrez A."/>
            <person name="Vazquez-Boland J.-A."/>
            <person name="Voss H."/>
            <person name="Wehland J."/>
            <person name="Cossart P."/>
        </authorList>
    </citation>
    <scope>NUCLEOTIDE SEQUENCE [LARGE SCALE GENOMIC DNA]</scope>
    <source>
        <strain>ATCC BAA-680 / CLIP 11262</strain>
    </source>
</reference>
<protein>
    <recommendedName>
        <fullName>Phosphoribosyl-ATP pyrophosphatase</fullName>
        <shortName>PRA-PH</shortName>
        <ecNumber>3.6.1.31</ecNumber>
    </recommendedName>
</protein>
<evidence type="ECO:0000250" key="1"/>
<evidence type="ECO:0000256" key="2">
    <source>
        <dbReference type="SAM" id="MobiDB-lite"/>
    </source>
</evidence>
<evidence type="ECO:0000305" key="3"/>
<organism>
    <name type="scientific">Listeria innocua serovar 6a (strain ATCC BAA-680 / CLIP 11262)</name>
    <dbReference type="NCBI Taxonomy" id="272626"/>
    <lineage>
        <taxon>Bacteria</taxon>
        <taxon>Bacillati</taxon>
        <taxon>Bacillota</taxon>
        <taxon>Bacilli</taxon>
        <taxon>Bacillales</taxon>
        <taxon>Listeriaceae</taxon>
        <taxon>Listeria</taxon>
    </lineage>
</organism>